<accession>P0A6B4</accession>
<accession>P29743</accession>
<accession>P78136</accession>
<accession>Q2M6Q1</accession>
<name>ALR1_ECOLI</name>
<gene>
    <name evidence="3 4" type="primary">alr</name>
    <name type="ordered locus">b4053</name>
    <name type="ordered locus">JW4013</name>
</gene>
<feature type="chain" id="PRO_0000114514" description="Alanine racemase, biosynthetic">
    <location>
        <begin position="1"/>
        <end position="359"/>
    </location>
</feature>
<feature type="active site" description="Proton acceptor; specific for D-alanine" evidence="1">
    <location>
        <position position="34"/>
    </location>
</feature>
<feature type="active site" description="Proton acceptor; specific for L-alanine" evidence="1">
    <location>
        <position position="255"/>
    </location>
</feature>
<feature type="binding site" evidence="5">
    <location>
        <position position="129"/>
    </location>
    <ligand>
        <name>substrate</name>
    </ligand>
</feature>
<feature type="binding site" evidence="5">
    <location>
        <position position="303"/>
    </location>
    <ligand>
        <name>substrate</name>
    </ligand>
</feature>
<feature type="modified residue" description="N6-(pyridoxal phosphate)lysine" evidence="2">
    <location>
        <position position="34"/>
    </location>
</feature>
<feature type="modified residue" description="N6-carboxylysine" evidence="2">
    <location>
        <position position="122"/>
    </location>
</feature>
<feature type="mutagenesis site" description="Slightly reduces affinity for D-Ala and L-Ala." evidence="2">
    <original>D</original>
    <variation>A</variation>
    <location>
        <position position="164"/>
    </location>
</feature>
<feature type="mutagenesis site" description="Reduces catalytic activity. Slightly reduces affinity for D-Ala and L-Ala." evidence="2">
    <original>D</original>
    <variation>K</variation>
    <location>
        <position position="164"/>
    </location>
</feature>
<feature type="mutagenesis site" description="Slightly reduces affinity for D-Ala and L-Ala." evidence="2">
    <original>E</original>
    <variation>A</variation>
    <location>
        <position position="165"/>
    </location>
</feature>
<feature type="mutagenesis site" description="Reduces catalytic activity. Slightly reduces affinity for D-Ala and L-Ala." evidence="2">
    <original>E</original>
    <variation>K</variation>
    <location>
        <position position="165"/>
    </location>
</feature>
<feature type="mutagenesis site" description="No effect on catalytic activity. No effect on affinity for D-Ala and L-Ala." evidence="2">
    <original>P</original>
    <variation>A</variation>
    <location>
        <position position="219"/>
    </location>
</feature>
<feature type="mutagenesis site" description="Slightly increases catalytic activity. Slightly increases affinity for D-Ala and L-Ala." evidence="2">
    <original>E</original>
    <variation>A</variation>
    <variation>K</variation>
    <variation>P</variation>
    <location>
        <position position="221"/>
    </location>
</feature>
<feature type="strand" evidence="7">
    <location>
        <begin position="4"/>
        <end position="9"/>
    </location>
</feature>
<feature type="helix" evidence="7">
    <location>
        <begin position="10"/>
        <end position="23"/>
    </location>
</feature>
<feature type="strand" evidence="7">
    <location>
        <begin position="27"/>
        <end position="32"/>
    </location>
</feature>
<feature type="helix" evidence="7">
    <location>
        <begin position="34"/>
        <end position="38"/>
    </location>
</feature>
<feature type="helix" evidence="7">
    <location>
        <begin position="42"/>
        <end position="48"/>
    </location>
</feature>
<feature type="strand" evidence="7">
    <location>
        <begin position="53"/>
        <end position="59"/>
    </location>
</feature>
<feature type="helix" evidence="7">
    <location>
        <begin position="60"/>
        <end position="68"/>
    </location>
</feature>
<feature type="strand" evidence="7">
    <location>
        <begin position="75"/>
        <end position="77"/>
    </location>
</feature>
<feature type="helix" evidence="7">
    <location>
        <begin position="84"/>
        <end position="86"/>
    </location>
</feature>
<feature type="helix" evidence="7">
    <location>
        <begin position="87"/>
        <end position="92"/>
    </location>
</feature>
<feature type="strand" evidence="7">
    <location>
        <begin position="95"/>
        <end position="99"/>
    </location>
</feature>
<feature type="helix" evidence="7">
    <location>
        <begin position="102"/>
        <end position="110"/>
    </location>
</feature>
<feature type="strand" evidence="7">
    <location>
        <begin position="119"/>
        <end position="123"/>
    </location>
</feature>
<feature type="strand" evidence="8">
    <location>
        <begin position="125"/>
        <end position="127"/>
    </location>
</feature>
<feature type="strand" evidence="7">
    <location>
        <begin position="129"/>
        <end position="132"/>
    </location>
</feature>
<feature type="helix" evidence="7">
    <location>
        <begin position="134"/>
        <end position="145"/>
    </location>
</feature>
<feature type="strand" evidence="6">
    <location>
        <begin position="148"/>
        <end position="150"/>
    </location>
</feature>
<feature type="strand" evidence="7">
    <location>
        <begin position="155"/>
        <end position="157"/>
    </location>
</feature>
<feature type="helix" evidence="7">
    <location>
        <begin position="170"/>
        <end position="182"/>
    </location>
</feature>
<feature type="helix" evidence="7">
    <location>
        <begin position="194"/>
        <end position="199"/>
    </location>
</feature>
<feature type="helix" evidence="7">
    <location>
        <begin position="201"/>
        <end position="203"/>
    </location>
</feature>
<feature type="strand" evidence="7">
    <location>
        <begin position="205"/>
        <end position="208"/>
    </location>
</feature>
<feature type="helix" evidence="7">
    <location>
        <begin position="212"/>
        <end position="215"/>
    </location>
</feature>
<feature type="strand" evidence="7">
    <location>
        <begin position="221"/>
        <end position="223"/>
    </location>
</feature>
<feature type="helix" evidence="7">
    <location>
        <begin position="226"/>
        <end position="229"/>
    </location>
</feature>
<feature type="strand" evidence="7">
    <location>
        <begin position="235"/>
        <end position="247"/>
    </location>
</feature>
<feature type="strand" evidence="7">
    <location>
        <begin position="252"/>
        <end position="254"/>
    </location>
</feature>
<feature type="helix" evidence="7">
    <location>
        <begin position="255"/>
        <end position="257"/>
    </location>
</feature>
<feature type="strand" evidence="7">
    <location>
        <begin position="265"/>
        <end position="271"/>
    </location>
</feature>
<feature type="turn" evidence="7">
    <location>
        <begin position="274"/>
        <end position="277"/>
    </location>
</feature>
<feature type="strand" evidence="7">
    <location>
        <begin position="287"/>
        <end position="290"/>
    </location>
</feature>
<feature type="strand" evidence="7">
    <location>
        <begin position="293"/>
        <end position="297"/>
    </location>
</feature>
<feature type="strand" evidence="7">
    <location>
        <begin position="303"/>
        <end position="309"/>
    </location>
</feature>
<feature type="strand" evidence="7">
    <location>
        <begin position="321"/>
        <end position="326"/>
    </location>
</feature>
<feature type="helix" evidence="7">
    <location>
        <begin position="331"/>
        <end position="338"/>
    </location>
</feature>
<feature type="helix" evidence="7">
    <location>
        <begin position="342"/>
        <end position="347"/>
    </location>
</feature>
<feature type="strand" evidence="7">
    <location>
        <begin position="353"/>
        <end position="358"/>
    </location>
</feature>
<organism>
    <name type="scientific">Escherichia coli (strain K12)</name>
    <dbReference type="NCBI Taxonomy" id="83333"/>
    <lineage>
        <taxon>Bacteria</taxon>
        <taxon>Pseudomonadati</taxon>
        <taxon>Pseudomonadota</taxon>
        <taxon>Gammaproteobacteria</taxon>
        <taxon>Enterobacterales</taxon>
        <taxon>Enterobacteriaceae</taxon>
        <taxon>Escherichia</taxon>
    </lineage>
</organism>
<evidence type="ECO:0000255" key="1">
    <source>
        <dbReference type="HAMAP-Rule" id="MF_01201"/>
    </source>
</evidence>
<evidence type="ECO:0000269" key="2">
    <source>
    </source>
</evidence>
<evidence type="ECO:0000303" key="3">
    <source>
    </source>
</evidence>
<evidence type="ECO:0000303" key="4">
    <source>
    </source>
</evidence>
<evidence type="ECO:0000305" key="5">
    <source>
    </source>
</evidence>
<evidence type="ECO:0007829" key="6">
    <source>
        <dbReference type="PDB" id="2RJG"/>
    </source>
</evidence>
<evidence type="ECO:0007829" key="7">
    <source>
        <dbReference type="PDB" id="4WR3"/>
    </source>
</evidence>
<evidence type="ECO:0007829" key="8">
    <source>
        <dbReference type="PDB" id="4XBJ"/>
    </source>
</evidence>
<keyword id="KW-0002">3D-structure</keyword>
<keyword id="KW-0133">Cell shape</keyword>
<keyword id="KW-0961">Cell wall biogenesis/degradation</keyword>
<keyword id="KW-0413">Isomerase</keyword>
<keyword id="KW-0573">Peptidoglycan synthesis</keyword>
<keyword id="KW-0663">Pyridoxal phosphate</keyword>
<keyword id="KW-1185">Reference proteome</keyword>
<sequence length="359" mass="39153">MQAATVVINRRALRHNLQRLRELAPASKMVAVVKANAYGHGLLETARTLPDADAFGVARLEEALRLRAGGITKPVLLLEGFFDARDLPTISAQHFHTAVHNEEQLAALEEASLDEPVTVWMKLDTGMHRLGVRPEQAEAFYHRLTQCKNVRQPVNIVSHFARADEPKCGATEKQLAIFNTFCEGKPGQRSIAASGGILLWPQSHFDWVRPGIILYGVSPLEDRSTGADFGCQPVMSLTSSLIAVREHKAGEPVGYGGTWVSERDTRLGVVAMGYGDGYPRAAPSGTPVLVNGREVPIVGRVAMDMICVDLGPQAQDKAGDPVILWGEGLPVERIAEMTKVSAYELITRLTSRVAMKYVD</sequence>
<protein>
    <recommendedName>
        <fullName evidence="5">Alanine racemase, biosynthetic</fullName>
        <ecNumber evidence="2">5.1.1.1</ecNumber>
    </recommendedName>
</protein>
<reference key="1">
    <citation type="journal article" date="1993" name="Gene">
        <title>The 92-min region of the Escherichia coli chromosome: location and cloning of the ubiA and alr genes.</title>
        <authorList>
            <person name="Lilley P.E."/>
            <person name="Stamford N.P."/>
            <person name="Vasudevan S.G."/>
            <person name="Dixon N.E."/>
        </authorList>
    </citation>
    <scope>NUCLEOTIDE SEQUENCE [GENOMIC DNA]</scope>
</reference>
<reference key="2">
    <citation type="journal article" date="1993" name="Nucleic Acids Res.">
        <title>Analysis of the Escherichia coli genome. IV. DNA sequence of the region from 89.2 to 92.8 minutes.</title>
        <authorList>
            <person name="Blattner F.R."/>
            <person name="Burland V.D."/>
            <person name="Plunkett G. III"/>
            <person name="Sofia H.J."/>
            <person name="Daniels D.L."/>
        </authorList>
    </citation>
    <scope>NUCLEOTIDE SEQUENCE [LARGE SCALE GENOMIC DNA]</scope>
    <source>
        <strain>K12 / MG1655 / ATCC 47076</strain>
    </source>
</reference>
<reference key="3">
    <citation type="journal article" date="1997" name="Science">
        <title>The complete genome sequence of Escherichia coli K-12.</title>
        <authorList>
            <person name="Blattner F.R."/>
            <person name="Plunkett G. III"/>
            <person name="Bloch C.A."/>
            <person name="Perna N.T."/>
            <person name="Burland V."/>
            <person name="Riley M."/>
            <person name="Collado-Vides J."/>
            <person name="Glasner J.D."/>
            <person name="Rode C.K."/>
            <person name="Mayhew G.F."/>
            <person name="Gregor J."/>
            <person name="Davis N.W."/>
            <person name="Kirkpatrick H.A."/>
            <person name="Goeden M.A."/>
            <person name="Rose D.J."/>
            <person name="Mau B."/>
            <person name="Shao Y."/>
        </authorList>
    </citation>
    <scope>NUCLEOTIDE SEQUENCE [LARGE SCALE GENOMIC DNA]</scope>
    <source>
        <strain>K12 / MG1655 / ATCC 47076</strain>
    </source>
</reference>
<reference key="4">
    <citation type="journal article" date="2006" name="Mol. Syst. Biol.">
        <title>Highly accurate genome sequences of Escherichia coli K-12 strains MG1655 and W3110.</title>
        <authorList>
            <person name="Hayashi K."/>
            <person name="Morooka N."/>
            <person name="Yamamoto Y."/>
            <person name="Fujita K."/>
            <person name="Isono K."/>
            <person name="Choi S."/>
            <person name="Ohtsubo E."/>
            <person name="Baba T."/>
            <person name="Wanner B.L."/>
            <person name="Mori H."/>
            <person name="Horiuchi T."/>
        </authorList>
    </citation>
    <scope>NUCLEOTIDE SEQUENCE [LARGE SCALE GENOMIC DNA]</scope>
    <source>
        <strain>K12 / W3110 / ATCC 27325 / DSM 5911</strain>
    </source>
</reference>
<reference key="5">
    <citation type="journal article" date="1984" name="J. Biol. Chem.">
        <title>Nucleotide sequence of dnaB and the primary structure of the dnaB protein from Escherichia coli.</title>
        <authorList>
            <person name="Nakayama N."/>
            <person name="Arai N."/>
            <person name="Bond M.W."/>
            <person name="Kaziro Y."/>
            <person name="Arai K."/>
        </authorList>
    </citation>
    <scope>NUCLEOTIDE SEQUENCE [GENOMIC DNA] OF 1-22</scope>
</reference>
<reference key="6">
    <citation type="journal article" date="1985" name="Biochem. Biophys. Res. Commun.">
        <title>Aromatic amino acid aminotransferase of Escherichia coli: nucleotide sequence of the tyrB gene.</title>
        <authorList>
            <person name="Kuramitsu S."/>
            <person name="Inoue K."/>
            <person name="Ogawa T."/>
            <person name="Ogawa H."/>
            <person name="Kagamiyama H."/>
        </authorList>
    </citation>
    <scope>NUCLEOTIDE SEQUENCE [GENOMIC DNA] OF 320-359</scope>
    <source>
        <strain>K12</strain>
    </source>
</reference>
<reference key="7">
    <citation type="journal article" date="2008" name="Protein Sci.">
        <title>Residues Asp164 and Glu165 at the substrate entryway function potently in substrate orientation of alanine racemase from E. coli: Enzymatic characterization with crystal structure analysis.</title>
        <authorList>
            <person name="Wu D."/>
            <person name="Hu T."/>
            <person name="Zhang L."/>
            <person name="Chen J."/>
            <person name="Du J."/>
            <person name="Ding J."/>
            <person name="Jiang H."/>
            <person name="Shen X."/>
        </authorList>
    </citation>
    <scope>X-RAY CRYSTALLOGRAPHY (2.40 ANGSTROMS) IN COMPLEXES WITH D-CYCLOSERINE AND PYRIDOXAL PHOSPHATE</scope>
    <scope>FUNCTION</scope>
    <scope>CATALYTIC ACTIVITY</scope>
    <scope>BIOPHYSICOCHEMICAL PROPERTIES</scope>
    <scope>COFACTOR</scope>
    <scope>SUBUNIT</scope>
    <scope>PYRIDOXAL PHOSPHATE AT LYS-34</scope>
    <scope>MUTAGENESIS OF ASP-164; GLU-165; PRO-219 AND GLU-221</scope>
    <scope>CARBOXYLATION AT LYS-122</scope>
</reference>
<comment type="function">
    <text evidence="2">Catalyzes the interconversion of L-alanine and D-alanine. Provides the D-alanine required for cell wall biosynthesis.</text>
</comment>
<comment type="catalytic activity">
    <reaction evidence="2">
        <text>L-alanine = D-alanine</text>
        <dbReference type="Rhea" id="RHEA:20249"/>
        <dbReference type="ChEBI" id="CHEBI:57416"/>
        <dbReference type="ChEBI" id="CHEBI:57972"/>
        <dbReference type="EC" id="5.1.1.1"/>
    </reaction>
</comment>
<comment type="cofactor">
    <cofactor evidence="2">
        <name>pyridoxal 5'-phosphate</name>
        <dbReference type="ChEBI" id="CHEBI:597326"/>
    </cofactor>
</comment>
<comment type="biophysicochemical properties">
    <kinetics>
        <KM evidence="2">0.31 mM for D-alanine</KM>
        <KM evidence="2">1 mM for L-alanine</KM>
    </kinetics>
</comment>
<comment type="pathway">
    <text evidence="2">Amino-acid biosynthesis; D-alanine biosynthesis; D-alanine from L-alanine: step 1/1.</text>
</comment>
<comment type="pathway">
    <text evidence="5">Cell wall biogenesis; peptidoglycan biosynthesis.</text>
</comment>
<comment type="subunit">
    <text evidence="2">Homodimer.</text>
</comment>
<comment type="similarity">
    <text evidence="1">Belongs to the alanine racemase family.</text>
</comment>
<dbReference type="EC" id="5.1.1.1" evidence="2"/>
<dbReference type="EMBL" id="U00006">
    <property type="protein sequence ID" value="AAC43147.1"/>
    <property type="molecule type" value="Genomic_DNA"/>
</dbReference>
<dbReference type="EMBL" id="U00096">
    <property type="protein sequence ID" value="AAC77023.1"/>
    <property type="molecule type" value="Genomic_DNA"/>
</dbReference>
<dbReference type="EMBL" id="AP009048">
    <property type="protein sequence ID" value="BAE78055.1"/>
    <property type="molecule type" value="Genomic_DNA"/>
</dbReference>
<dbReference type="EMBL" id="K01174">
    <property type="status" value="NOT_ANNOTATED_CDS"/>
    <property type="molecule type" value="Genomic_DNA"/>
</dbReference>
<dbReference type="EMBL" id="M12047">
    <property type="status" value="NOT_ANNOTATED_CDS"/>
    <property type="molecule type" value="Genomic_DNA"/>
</dbReference>
<dbReference type="PIR" id="D65213">
    <property type="entry name" value="PC1296"/>
</dbReference>
<dbReference type="RefSeq" id="NP_418477.1">
    <property type="nucleotide sequence ID" value="NC_000913.3"/>
</dbReference>
<dbReference type="RefSeq" id="WP_001147328.1">
    <property type="nucleotide sequence ID" value="NZ_STEB01000022.1"/>
</dbReference>
<dbReference type="PDB" id="2RJG">
    <property type="method" value="X-ray"/>
    <property type="resolution" value="2.40 A"/>
    <property type="chains" value="A/B/C/D=1-359"/>
</dbReference>
<dbReference type="PDB" id="2RJH">
    <property type="method" value="X-ray"/>
    <property type="resolution" value="2.40 A"/>
    <property type="chains" value="A/B/C/D=1-359"/>
</dbReference>
<dbReference type="PDB" id="3B8T">
    <property type="method" value="X-ray"/>
    <property type="resolution" value="3.00 A"/>
    <property type="chains" value="A/B/C/D=1-359"/>
</dbReference>
<dbReference type="PDB" id="3B8U">
    <property type="method" value="X-ray"/>
    <property type="resolution" value="3.00 A"/>
    <property type="chains" value="A/B/C/D=1-359"/>
</dbReference>
<dbReference type="PDB" id="3B8V">
    <property type="method" value="X-ray"/>
    <property type="resolution" value="2.60 A"/>
    <property type="chains" value="A/B/C/D=1-359"/>
</dbReference>
<dbReference type="PDB" id="3B8W">
    <property type="method" value="X-ray"/>
    <property type="resolution" value="2.70 A"/>
    <property type="chains" value="A/B/C/D=1-359"/>
</dbReference>
<dbReference type="PDB" id="4WR3">
    <property type="method" value="X-ray"/>
    <property type="resolution" value="1.90 A"/>
    <property type="chains" value="A/B/C/D=1-359"/>
</dbReference>
<dbReference type="PDB" id="4XBJ">
    <property type="method" value="X-ray"/>
    <property type="resolution" value="2.25 A"/>
    <property type="chains" value="A/B/C/D=1-359"/>
</dbReference>
<dbReference type="PDBsum" id="2RJG"/>
<dbReference type="PDBsum" id="2RJH"/>
<dbReference type="PDBsum" id="3B8T"/>
<dbReference type="PDBsum" id="3B8U"/>
<dbReference type="PDBsum" id="3B8V"/>
<dbReference type="PDBsum" id="3B8W"/>
<dbReference type="PDBsum" id="4WR3"/>
<dbReference type="PDBsum" id="4XBJ"/>
<dbReference type="SMR" id="P0A6B4"/>
<dbReference type="BioGRID" id="4260823">
    <property type="interactions" value="603"/>
</dbReference>
<dbReference type="FunCoup" id="P0A6B4">
    <property type="interactions" value="444"/>
</dbReference>
<dbReference type="IntAct" id="P0A6B4">
    <property type="interactions" value="6"/>
</dbReference>
<dbReference type="STRING" id="511145.b4053"/>
<dbReference type="BindingDB" id="P0A6B4"/>
<dbReference type="ChEMBL" id="CHEMBL2833"/>
<dbReference type="jPOST" id="P0A6B4"/>
<dbReference type="PaxDb" id="511145-b4053"/>
<dbReference type="EnsemblBacteria" id="AAC77023">
    <property type="protein sequence ID" value="AAC77023"/>
    <property type="gene ID" value="b4053"/>
</dbReference>
<dbReference type="GeneID" id="75204196"/>
<dbReference type="GeneID" id="948564"/>
<dbReference type="KEGG" id="ecj:JW4013"/>
<dbReference type="KEGG" id="eco:b4053"/>
<dbReference type="KEGG" id="ecoc:C3026_21900"/>
<dbReference type="PATRIC" id="fig|1411691.4.peg.2654"/>
<dbReference type="EchoBASE" id="EB0001"/>
<dbReference type="eggNOG" id="COG0787">
    <property type="taxonomic scope" value="Bacteria"/>
</dbReference>
<dbReference type="HOGENOM" id="CLU_028393_1_0_6"/>
<dbReference type="InParanoid" id="P0A6B4"/>
<dbReference type="OMA" id="WEILCGF"/>
<dbReference type="OrthoDB" id="9813814at2"/>
<dbReference type="PhylomeDB" id="P0A6B4"/>
<dbReference type="BioCyc" id="EcoCyc:ALARACEBIOSYN-MONOMER"/>
<dbReference type="BioCyc" id="MetaCyc:ALARACEBIOSYN-MONOMER"/>
<dbReference type="BRENDA" id="5.1.1.1">
    <property type="organism ID" value="2026"/>
</dbReference>
<dbReference type="SABIO-RK" id="P0A6B4"/>
<dbReference type="UniPathway" id="UPA00042">
    <property type="reaction ID" value="UER00497"/>
</dbReference>
<dbReference type="UniPathway" id="UPA00219"/>
<dbReference type="EvolutionaryTrace" id="P0A6B4"/>
<dbReference type="PRO" id="PR:P0A6B4"/>
<dbReference type="Proteomes" id="UP000000625">
    <property type="component" value="Chromosome"/>
</dbReference>
<dbReference type="GO" id="GO:0005829">
    <property type="term" value="C:cytosol"/>
    <property type="evidence" value="ECO:0000318"/>
    <property type="project" value="GO_Central"/>
</dbReference>
<dbReference type="GO" id="GO:0008784">
    <property type="term" value="F:alanine racemase activity"/>
    <property type="evidence" value="ECO:0000314"/>
    <property type="project" value="EcoCyc"/>
</dbReference>
<dbReference type="GO" id="GO:0042803">
    <property type="term" value="F:protein homodimerization activity"/>
    <property type="evidence" value="ECO:0000353"/>
    <property type="project" value="EcoCyc"/>
</dbReference>
<dbReference type="GO" id="GO:0030170">
    <property type="term" value="F:pyridoxal phosphate binding"/>
    <property type="evidence" value="ECO:0000314"/>
    <property type="project" value="EcoCyc"/>
</dbReference>
<dbReference type="GO" id="GO:0071555">
    <property type="term" value="P:cell wall organization"/>
    <property type="evidence" value="ECO:0007669"/>
    <property type="project" value="UniProtKB-KW"/>
</dbReference>
<dbReference type="GO" id="GO:0030632">
    <property type="term" value="P:D-alanine biosynthetic process"/>
    <property type="evidence" value="ECO:0000315"/>
    <property type="project" value="EcoCyc"/>
</dbReference>
<dbReference type="GO" id="GO:0009252">
    <property type="term" value="P:peptidoglycan biosynthetic process"/>
    <property type="evidence" value="ECO:0007669"/>
    <property type="project" value="UniProtKB-UniPathway"/>
</dbReference>
<dbReference type="GO" id="GO:0008360">
    <property type="term" value="P:regulation of cell shape"/>
    <property type="evidence" value="ECO:0007669"/>
    <property type="project" value="UniProtKB-KW"/>
</dbReference>
<dbReference type="CDD" id="cd06827">
    <property type="entry name" value="PLPDE_III_AR_proteobact"/>
    <property type="match status" value="1"/>
</dbReference>
<dbReference type="FunFam" id="2.40.37.10:FF:000002">
    <property type="entry name" value="Alanine racemase"/>
    <property type="match status" value="1"/>
</dbReference>
<dbReference type="FunFam" id="3.20.20.10:FF:000002">
    <property type="entry name" value="Alanine racemase"/>
    <property type="match status" value="1"/>
</dbReference>
<dbReference type="Gene3D" id="3.20.20.10">
    <property type="entry name" value="Alanine racemase"/>
    <property type="match status" value="1"/>
</dbReference>
<dbReference type="Gene3D" id="2.40.37.10">
    <property type="entry name" value="Lyase, Ornithine Decarboxylase, Chain A, domain 1"/>
    <property type="match status" value="1"/>
</dbReference>
<dbReference type="HAMAP" id="MF_01201">
    <property type="entry name" value="Ala_racemase"/>
    <property type="match status" value="1"/>
</dbReference>
<dbReference type="InterPro" id="IPR000821">
    <property type="entry name" value="Ala_racemase"/>
</dbReference>
<dbReference type="InterPro" id="IPR009006">
    <property type="entry name" value="Ala_racemase/Decarboxylase_C"/>
</dbReference>
<dbReference type="InterPro" id="IPR011079">
    <property type="entry name" value="Ala_racemase_C"/>
</dbReference>
<dbReference type="InterPro" id="IPR001608">
    <property type="entry name" value="Ala_racemase_N"/>
</dbReference>
<dbReference type="InterPro" id="IPR020622">
    <property type="entry name" value="Ala_racemase_pyridoxalP-BS"/>
</dbReference>
<dbReference type="InterPro" id="IPR029066">
    <property type="entry name" value="PLP-binding_barrel"/>
</dbReference>
<dbReference type="NCBIfam" id="TIGR00492">
    <property type="entry name" value="alr"/>
    <property type="match status" value="1"/>
</dbReference>
<dbReference type="PANTHER" id="PTHR30511">
    <property type="entry name" value="ALANINE RACEMASE"/>
    <property type="match status" value="1"/>
</dbReference>
<dbReference type="PANTHER" id="PTHR30511:SF4">
    <property type="entry name" value="ALANINE RACEMASE, BIOSYNTHETIC"/>
    <property type="match status" value="1"/>
</dbReference>
<dbReference type="Pfam" id="PF00842">
    <property type="entry name" value="Ala_racemase_C"/>
    <property type="match status" value="1"/>
</dbReference>
<dbReference type="Pfam" id="PF01168">
    <property type="entry name" value="Ala_racemase_N"/>
    <property type="match status" value="1"/>
</dbReference>
<dbReference type="PRINTS" id="PR00992">
    <property type="entry name" value="ALARACEMASE"/>
</dbReference>
<dbReference type="SMART" id="SM01005">
    <property type="entry name" value="Ala_racemase_C"/>
    <property type="match status" value="1"/>
</dbReference>
<dbReference type="SUPFAM" id="SSF50621">
    <property type="entry name" value="Alanine racemase C-terminal domain-like"/>
    <property type="match status" value="1"/>
</dbReference>
<dbReference type="SUPFAM" id="SSF51419">
    <property type="entry name" value="PLP-binding barrel"/>
    <property type="match status" value="1"/>
</dbReference>
<dbReference type="PROSITE" id="PS00395">
    <property type="entry name" value="ALANINE_RACEMASE"/>
    <property type="match status" value="1"/>
</dbReference>
<proteinExistence type="evidence at protein level"/>